<protein>
    <recommendedName>
        <fullName>Protein HGH1 homolog</fullName>
    </recommendedName>
</protein>
<name>HGH1_HUMAN</name>
<accession>Q9BTY7</accession>
<accession>P0CB43</accession>
<feature type="initiator methionine" description="Removed" evidence="2 4">
    <location>
        <position position="1"/>
    </location>
</feature>
<feature type="chain" id="PRO_0000273318" description="Protein HGH1 homolog">
    <location>
        <begin position="2"/>
        <end position="390"/>
    </location>
</feature>
<feature type="region of interest" description="Disordered" evidence="1">
    <location>
        <begin position="371"/>
        <end position="390"/>
    </location>
</feature>
<feature type="modified residue" description="N-acetylglycine" evidence="2 4">
    <location>
        <position position="2"/>
    </location>
</feature>
<feature type="modified residue" description="Phosphoserine" evidence="6">
    <location>
        <position position="17"/>
    </location>
</feature>
<feature type="modified residue" description="Phosphoserine" evidence="6">
    <location>
        <position position="214"/>
    </location>
</feature>
<feature type="modified residue" description="Phosphothreonine" evidence="5">
    <location>
        <position position="388"/>
    </location>
</feature>
<gene>
    <name type="primary">HGH1</name>
    <name type="synonym">C8orf30A</name>
    <name type="synonym">C8orf30B</name>
    <name type="synonym">FAM203A</name>
    <name type="synonym">FAM203B</name>
</gene>
<dbReference type="EMBL" id="AC104592">
    <property type="status" value="NOT_ANNOTATED_CDS"/>
    <property type="molecule type" value="Genomic_DNA"/>
</dbReference>
<dbReference type="EMBL" id="BC003035">
    <property type="protein sequence ID" value="AAH03035.1"/>
    <property type="molecule type" value="mRNA"/>
</dbReference>
<dbReference type="EMBL" id="BC009915">
    <property type="protein sequence ID" value="AAH09915.1"/>
    <property type="molecule type" value="mRNA"/>
</dbReference>
<dbReference type="CCDS" id="CCDS6417.1"/>
<dbReference type="RefSeq" id="NP_057542.2">
    <property type="nucleotide sequence ID" value="NM_016458.3"/>
</dbReference>
<dbReference type="SMR" id="Q9BTY7"/>
<dbReference type="BioGRID" id="119398">
    <property type="interactions" value="70"/>
</dbReference>
<dbReference type="FunCoup" id="Q9BTY7">
    <property type="interactions" value="715"/>
</dbReference>
<dbReference type="IntAct" id="Q9BTY7">
    <property type="interactions" value="20"/>
</dbReference>
<dbReference type="MINT" id="Q9BTY7"/>
<dbReference type="STRING" id="9606.ENSP00000321320"/>
<dbReference type="GlyGen" id="Q9BTY7">
    <property type="glycosylation" value="1 site, 1 O-linked glycan (1 site)"/>
</dbReference>
<dbReference type="iPTMnet" id="Q9BTY7"/>
<dbReference type="PhosphoSitePlus" id="Q9BTY7"/>
<dbReference type="BioMuta" id="HGH1"/>
<dbReference type="DMDM" id="74733161"/>
<dbReference type="jPOST" id="Q9BTY7"/>
<dbReference type="MassIVE" id="Q9BTY7"/>
<dbReference type="PaxDb" id="9606-ENSP00000321320"/>
<dbReference type="PeptideAtlas" id="Q9BTY7"/>
<dbReference type="Pumba" id="Q9BTY7"/>
<dbReference type="Antibodypedia" id="28319">
    <property type="antibodies" value="153 antibodies from 27 providers"/>
</dbReference>
<dbReference type="DNASU" id="51236"/>
<dbReference type="Ensembl" id="ENST00000347708.5">
    <property type="protein sequence ID" value="ENSP00000321320.5"/>
    <property type="gene ID" value="ENSG00000235173.7"/>
</dbReference>
<dbReference type="GeneID" id="51236"/>
<dbReference type="KEGG" id="hsa:51236"/>
<dbReference type="MANE-Select" id="ENST00000347708.5">
    <property type="protein sequence ID" value="ENSP00000321320.5"/>
    <property type="RefSeq nucleotide sequence ID" value="NM_016458.4"/>
    <property type="RefSeq protein sequence ID" value="NP_057542.2"/>
</dbReference>
<dbReference type="UCSC" id="uc010mfs.4">
    <property type="organism name" value="human"/>
</dbReference>
<dbReference type="AGR" id="HGNC:24161"/>
<dbReference type="CTD" id="51236"/>
<dbReference type="DisGeNET" id="51236"/>
<dbReference type="GeneCards" id="HGH1"/>
<dbReference type="HGNC" id="HGNC:24161">
    <property type="gene designation" value="HGH1"/>
</dbReference>
<dbReference type="HPA" id="ENSG00000235173">
    <property type="expression patterns" value="Low tissue specificity"/>
</dbReference>
<dbReference type="MIM" id="620684">
    <property type="type" value="gene"/>
</dbReference>
<dbReference type="neXtProt" id="NX_Q9BTY7"/>
<dbReference type="OpenTargets" id="ENSG00000235173"/>
<dbReference type="PharmGKB" id="PA142672348"/>
<dbReference type="VEuPathDB" id="HostDB:ENSG00000235173"/>
<dbReference type="eggNOG" id="KOG2973">
    <property type="taxonomic scope" value="Eukaryota"/>
</dbReference>
<dbReference type="GeneTree" id="ENSGT00390000016546"/>
<dbReference type="HOGENOM" id="CLU_037769_3_0_1"/>
<dbReference type="InParanoid" id="Q9BTY7"/>
<dbReference type="OMA" id="MCILLTN"/>
<dbReference type="OrthoDB" id="338814at2759"/>
<dbReference type="PAN-GO" id="Q9BTY7">
    <property type="GO annotations" value="0 GO annotations based on evolutionary models"/>
</dbReference>
<dbReference type="PhylomeDB" id="Q9BTY7"/>
<dbReference type="TreeFam" id="TF313296"/>
<dbReference type="PathwayCommons" id="Q9BTY7"/>
<dbReference type="SignaLink" id="Q9BTY7"/>
<dbReference type="BioGRID-ORCS" id="51236">
    <property type="hits" value="11 hits in 1062 CRISPR screens"/>
</dbReference>
<dbReference type="ChiTaRS" id="HGH1">
    <property type="organism name" value="human"/>
</dbReference>
<dbReference type="GenomeRNAi" id="51236"/>
<dbReference type="Pharos" id="Q9BTY7">
    <property type="development level" value="Tdark"/>
</dbReference>
<dbReference type="PRO" id="PR:Q9BTY7"/>
<dbReference type="Proteomes" id="UP000005640">
    <property type="component" value="Chromosome 8"/>
</dbReference>
<dbReference type="RNAct" id="Q9BTY7">
    <property type="molecule type" value="protein"/>
</dbReference>
<dbReference type="Bgee" id="ENSG00000235173">
    <property type="expression patterns" value="Expressed in ileal mucosa and 183 other cell types or tissues"/>
</dbReference>
<dbReference type="ExpressionAtlas" id="Q9BTY7">
    <property type="expression patterns" value="baseline and differential"/>
</dbReference>
<dbReference type="Gene3D" id="1.25.10.10">
    <property type="entry name" value="Leucine-rich Repeat Variant"/>
    <property type="match status" value="1"/>
</dbReference>
<dbReference type="InterPro" id="IPR011989">
    <property type="entry name" value="ARM-like"/>
</dbReference>
<dbReference type="InterPro" id="IPR016024">
    <property type="entry name" value="ARM-type_fold"/>
</dbReference>
<dbReference type="InterPro" id="IPR039717">
    <property type="entry name" value="Hgh1"/>
</dbReference>
<dbReference type="InterPro" id="IPR007206">
    <property type="entry name" value="Protein_HGH1_C"/>
</dbReference>
<dbReference type="InterPro" id="IPR007205">
    <property type="entry name" value="Protein_HGH1_N"/>
</dbReference>
<dbReference type="PANTHER" id="PTHR13387">
    <property type="entry name" value="PROTEIN HGH1 HOMOLOG"/>
    <property type="match status" value="1"/>
</dbReference>
<dbReference type="PANTHER" id="PTHR13387:SF9">
    <property type="entry name" value="PROTEIN HGH1 HOMOLOG"/>
    <property type="match status" value="1"/>
</dbReference>
<dbReference type="Pfam" id="PF04063">
    <property type="entry name" value="DUF383"/>
    <property type="match status" value="1"/>
</dbReference>
<dbReference type="Pfam" id="PF04064">
    <property type="entry name" value="DUF384"/>
    <property type="match status" value="1"/>
</dbReference>
<dbReference type="SUPFAM" id="SSF48371">
    <property type="entry name" value="ARM repeat"/>
    <property type="match status" value="1"/>
</dbReference>
<sequence>MGEAGAGAGASGGPEASPEAEVVKLLPFLAPGARADLQAAAVRHVLALTGCGPGRALLAGQAALLQALMELAPASAPARDAARALVNLAADPGLHETLLAADPGLPARLMGRALDPQWPWAEEAAAALANLSREPAPCAALMAALAAAEPADSGLERLVRALCTPGYNARAPLHYLAPLLSNLSQRPAARAFLLDPDRCVVQRLLPLTQYPDSSVRRGGVVGTLRNCCFEHRHHEWLLGPEVDILPFLLLPLAGPEDFSEEEMERLPVDLQYLPPDKQREPDADIRKMLVEAIMLLTATAPGRQQVRDQGAYLILRELHSWEPEPDVRTACEKLIQVLIGDEPERGMENLLEVQVPEDVEQQLQQLDCREQEQLERELAPEPWVERATPT</sequence>
<keyword id="KW-0007">Acetylation</keyword>
<keyword id="KW-0903">Direct protein sequencing</keyword>
<keyword id="KW-0597">Phosphoprotein</keyword>
<keyword id="KW-1267">Proteomics identification</keyword>
<keyword id="KW-1185">Reference proteome</keyword>
<reference key="1">
    <citation type="journal article" date="2006" name="Nature">
        <title>DNA sequence and analysis of human chromosome 8.</title>
        <authorList>
            <person name="Nusbaum C."/>
            <person name="Mikkelsen T.S."/>
            <person name="Zody M.C."/>
            <person name="Asakawa S."/>
            <person name="Taudien S."/>
            <person name="Garber M."/>
            <person name="Kodira C.D."/>
            <person name="Schueler M.G."/>
            <person name="Shimizu A."/>
            <person name="Whittaker C.A."/>
            <person name="Chang J.L."/>
            <person name="Cuomo C.A."/>
            <person name="Dewar K."/>
            <person name="FitzGerald M.G."/>
            <person name="Yang X."/>
            <person name="Allen N.R."/>
            <person name="Anderson S."/>
            <person name="Asakawa T."/>
            <person name="Blechschmidt K."/>
            <person name="Bloom T."/>
            <person name="Borowsky M.L."/>
            <person name="Butler J."/>
            <person name="Cook A."/>
            <person name="Corum B."/>
            <person name="DeArellano K."/>
            <person name="DeCaprio D."/>
            <person name="Dooley K.T."/>
            <person name="Dorris L. III"/>
            <person name="Engels R."/>
            <person name="Gloeckner G."/>
            <person name="Hafez N."/>
            <person name="Hagopian D.S."/>
            <person name="Hall J.L."/>
            <person name="Ishikawa S.K."/>
            <person name="Jaffe D.B."/>
            <person name="Kamat A."/>
            <person name="Kudoh J."/>
            <person name="Lehmann R."/>
            <person name="Lokitsang T."/>
            <person name="Macdonald P."/>
            <person name="Major J.E."/>
            <person name="Matthews C.D."/>
            <person name="Mauceli E."/>
            <person name="Menzel U."/>
            <person name="Mihalev A.H."/>
            <person name="Minoshima S."/>
            <person name="Murayama Y."/>
            <person name="Naylor J.W."/>
            <person name="Nicol R."/>
            <person name="Nguyen C."/>
            <person name="O'Leary S.B."/>
            <person name="O'Neill K."/>
            <person name="Parker S.C.J."/>
            <person name="Polley A."/>
            <person name="Raymond C.K."/>
            <person name="Reichwald K."/>
            <person name="Rodriguez J."/>
            <person name="Sasaki T."/>
            <person name="Schilhabel M."/>
            <person name="Siddiqui R."/>
            <person name="Smith C.L."/>
            <person name="Sneddon T.P."/>
            <person name="Talamas J.A."/>
            <person name="Tenzin P."/>
            <person name="Topham K."/>
            <person name="Venkataraman V."/>
            <person name="Wen G."/>
            <person name="Yamazaki S."/>
            <person name="Young S.K."/>
            <person name="Zeng Q."/>
            <person name="Zimmer A.R."/>
            <person name="Rosenthal A."/>
            <person name="Birren B.W."/>
            <person name="Platzer M."/>
            <person name="Shimizu N."/>
            <person name="Lander E.S."/>
        </authorList>
    </citation>
    <scope>NUCLEOTIDE SEQUENCE [LARGE SCALE GENOMIC DNA]</scope>
</reference>
<reference key="2">
    <citation type="journal article" date="2004" name="Genome Res.">
        <title>The status, quality, and expansion of the NIH full-length cDNA project: the Mammalian Gene Collection (MGC).</title>
        <authorList>
            <consortium name="The MGC Project Team"/>
        </authorList>
    </citation>
    <scope>NUCLEOTIDE SEQUENCE [LARGE SCALE MRNA]</scope>
    <source>
        <tissue>Lung</tissue>
    </source>
</reference>
<reference key="3">
    <citation type="submission" date="2010-01" db="UniProtKB">
        <authorList>
            <person name="Bienvenut W.V."/>
        </authorList>
    </citation>
    <scope>PROTEIN SEQUENCE OF 2-24 AND 56-79</scope>
    <scope>CLEAVAGE OF INITIATOR METHIONINE</scope>
    <scope>ACETYLATION AT GLY-2</scope>
    <scope>IDENTIFICATION BY MASS SPECTROMETRY</scope>
    <source>
        <tissue>Ovarian carcinoma</tissue>
    </source>
</reference>
<reference key="4">
    <citation type="journal article" date="2008" name="Proc. Natl. Acad. Sci. U.S.A.">
        <title>A quantitative atlas of mitotic phosphorylation.</title>
        <authorList>
            <person name="Dephoure N."/>
            <person name="Zhou C."/>
            <person name="Villen J."/>
            <person name="Beausoleil S.A."/>
            <person name="Bakalarski C.E."/>
            <person name="Elledge S.J."/>
            <person name="Gygi S.P."/>
        </authorList>
    </citation>
    <scope>IDENTIFICATION BY MASS SPECTROMETRY [LARGE SCALE ANALYSIS]</scope>
    <source>
        <tissue>Cervix carcinoma</tissue>
    </source>
</reference>
<reference key="5">
    <citation type="journal article" date="2009" name="Anal. Chem.">
        <title>Lys-N and trypsin cover complementary parts of the phosphoproteome in a refined SCX-based approach.</title>
        <authorList>
            <person name="Gauci S."/>
            <person name="Helbig A.O."/>
            <person name="Slijper M."/>
            <person name="Krijgsveld J."/>
            <person name="Heck A.J."/>
            <person name="Mohammed S."/>
        </authorList>
    </citation>
    <scope>ACETYLATION [LARGE SCALE ANALYSIS] AT GLY-2</scope>
    <scope>CLEAVAGE OF INITIATOR METHIONINE [LARGE SCALE ANALYSIS]</scope>
    <scope>IDENTIFICATION BY MASS SPECTROMETRY [LARGE SCALE ANALYSIS]</scope>
</reference>
<reference key="6">
    <citation type="journal article" date="2010" name="Sci. Signal.">
        <title>Quantitative phosphoproteomics reveals widespread full phosphorylation site occupancy during mitosis.</title>
        <authorList>
            <person name="Olsen J.V."/>
            <person name="Vermeulen M."/>
            <person name="Santamaria A."/>
            <person name="Kumar C."/>
            <person name="Miller M.L."/>
            <person name="Jensen L.J."/>
            <person name="Gnad F."/>
            <person name="Cox J."/>
            <person name="Jensen T.S."/>
            <person name="Nigg E.A."/>
            <person name="Brunak S."/>
            <person name="Mann M."/>
        </authorList>
    </citation>
    <scope>PHOSPHORYLATION [LARGE SCALE ANALYSIS] AT THR-388</scope>
    <scope>IDENTIFICATION BY MASS SPECTROMETRY [LARGE SCALE ANALYSIS]</scope>
    <source>
        <tissue>Cervix carcinoma</tissue>
    </source>
</reference>
<reference key="7">
    <citation type="journal article" date="2011" name="BMC Syst. Biol.">
        <title>Initial characterization of the human central proteome.</title>
        <authorList>
            <person name="Burkard T.R."/>
            <person name="Planyavsky M."/>
            <person name="Kaupe I."/>
            <person name="Breitwieser F.P."/>
            <person name="Buerckstuemmer T."/>
            <person name="Bennett K.L."/>
            <person name="Superti-Furga G."/>
            <person name="Colinge J."/>
        </authorList>
    </citation>
    <scope>IDENTIFICATION BY MASS SPECTROMETRY [LARGE SCALE ANALYSIS]</scope>
</reference>
<reference key="8">
    <citation type="journal article" date="2012" name="Proc. Natl. Acad. Sci. U.S.A.">
        <title>N-terminal acetylome analyses and functional insights of the N-terminal acetyltransferase NatB.</title>
        <authorList>
            <person name="Van Damme P."/>
            <person name="Lasa M."/>
            <person name="Polevoda B."/>
            <person name="Gazquez C."/>
            <person name="Elosegui-Artola A."/>
            <person name="Kim D.S."/>
            <person name="De Juan-Pardo E."/>
            <person name="Demeyer K."/>
            <person name="Hole K."/>
            <person name="Larrea E."/>
            <person name="Timmerman E."/>
            <person name="Prieto J."/>
            <person name="Arnesen T."/>
            <person name="Sherman F."/>
            <person name="Gevaert K."/>
            <person name="Aldabe R."/>
        </authorList>
    </citation>
    <scope>IDENTIFICATION BY MASS SPECTROMETRY [LARGE SCALE ANALYSIS]</scope>
</reference>
<reference key="9">
    <citation type="journal article" date="2013" name="J. Proteome Res.">
        <title>Toward a comprehensive characterization of a human cancer cell phosphoproteome.</title>
        <authorList>
            <person name="Zhou H."/>
            <person name="Di Palma S."/>
            <person name="Preisinger C."/>
            <person name="Peng M."/>
            <person name="Polat A.N."/>
            <person name="Heck A.J."/>
            <person name="Mohammed S."/>
        </authorList>
    </citation>
    <scope>PHOSPHORYLATION [LARGE SCALE ANALYSIS] AT SER-17 AND SER-214</scope>
    <scope>IDENTIFICATION BY MASS SPECTROMETRY [LARGE SCALE ANALYSIS]</scope>
    <source>
        <tissue>Cervix carcinoma</tissue>
        <tissue>Erythroleukemia</tissue>
    </source>
</reference>
<proteinExistence type="evidence at protein level"/>
<comment type="interaction">
    <interactant intactId="EBI-6166333">
        <id>Q9BTY7</id>
    </interactant>
    <interactant intactId="EBI-1050890">
        <id>O95801</id>
        <label>TTC4</label>
    </interactant>
    <organismsDiffer>false</organismsDiffer>
    <experiments>4</experiments>
</comment>
<comment type="similarity">
    <text evidence="3">Belongs to the HGH1 family.</text>
</comment>
<organism>
    <name type="scientific">Homo sapiens</name>
    <name type="common">Human</name>
    <dbReference type="NCBI Taxonomy" id="9606"/>
    <lineage>
        <taxon>Eukaryota</taxon>
        <taxon>Metazoa</taxon>
        <taxon>Chordata</taxon>
        <taxon>Craniata</taxon>
        <taxon>Vertebrata</taxon>
        <taxon>Euteleostomi</taxon>
        <taxon>Mammalia</taxon>
        <taxon>Eutheria</taxon>
        <taxon>Euarchontoglires</taxon>
        <taxon>Primates</taxon>
        <taxon>Haplorrhini</taxon>
        <taxon>Catarrhini</taxon>
        <taxon>Hominidae</taxon>
        <taxon>Homo</taxon>
    </lineage>
</organism>
<evidence type="ECO:0000256" key="1">
    <source>
        <dbReference type="SAM" id="MobiDB-lite"/>
    </source>
</evidence>
<evidence type="ECO:0000269" key="2">
    <source ref="3"/>
</evidence>
<evidence type="ECO:0000305" key="3"/>
<evidence type="ECO:0007744" key="4">
    <source>
    </source>
</evidence>
<evidence type="ECO:0007744" key="5">
    <source>
    </source>
</evidence>
<evidence type="ECO:0007744" key="6">
    <source>
    </source>
</evidence>